<protein>
    <recommendedName>
        <fullName evidence="1">Elongation factor Ts</fullName>
        <shortName evidence="1">EF-Ts</shortName>
    </recommendedName>
</protein>
<evidence type="ECO:0000255" key="1">
    <source>
        <dbReference type="HAMAP-Rule" id="MF_00050"/>
    </source>
</evidence>
<reference key="1">
    <citation type="journal article" date="2010" name="J. Bacteriol.">
        <title>Complete genome sequence of the aerobic facultative methanotroph Methylocella silvestris BL2.</title>
        <authorList>
            <person name="Chen Y."/>
            <person name="Crombie A."/>
            <person name="Rahman M.T."/>
            <person name="Dedysh S.N."/>
            <person name="Liesack W."/>
            <person name="Stott M.B."/>
            <person name="Alam M."/>
            <person name="Theisen A.R."/>
            <person name="Murrell J.C."/>
            <person name="Dunfield P.F."/>
        </authorList>
    </citation>
    <scope>NUCLEOTIDE SEQUENCE [LARGE SCALE GENOMIC DNA]</scope>
    <source>
        <strain>DSM 15510 / CIP 108128 / LMG 27833 / NCIMB 13906 / BL2</strain>
    </source>
</reference>
<comment type="function">
    <text evidence="1">Associates with the EF-Tu.GDP complex and induces the exchange of GDP to GTP. It remains bound to the aminoacyl-tRNA.EF-Tu.GTP complex up to the GTP hydrolysis stage on the ribosome.</text>
</comment>
<comment type="subcellular location">
    <subcellularLocation>
        <location evidence="1">Cytoplasm</location>
    </subcellularLocation>
</comment>
<comment type="similarity">
    <text evidence="1">Belongs to the EF-Ts family.</text>
</comment>
<gene>
    <name evidence="1" type="primary">tsf</name>
    <name type="ordered locus">Msil_1693</name>
</gene>
<dbReference type="EMBL" id="CP001280">
    <property type="protein sequence ID" value="ACK50640.1"/>
    <property type="molecule type" value="Genomic_DNA"/>
</dbReference>
<dbReference type="RefSeq" id="WP_012590710.1">
    <property type="nucleotide sequence ID" value="NC_011666.1"/>
</dbReference>
<dbReference type="SMR" id="B8EKA0"/>
<dbReference type="STRING" id="395965.Msil_1693"/>
<dbReference type="KEGG" id="msl:Msil_1693"/>
<dbReference type="eggNOG" id="COG0264">
    <property type="taxonomic scope" value="Bacteria"/>
</dbReference>
<dbReference type="HOGENOM" id="CLU_047155_2_0_5"/>
<dbReference type="OrthoDB" id="9808348at2"/>
<dbReference type="Proteomes" id="UP000002257">
    <property type="component" value="Chromosome"/>
</dbReference>
<dbReference type="GO" id="GO:0005737">
    <property type="term" value="C:cytoplasm"/>
    <property type="evidence" value="ECO:0007669"/>
    <property type="project" value="UniProtKB-SubCell"/>
</dbReference>
<dbReference type="GO" id="GO:0003746">
    <property type="term" value="F:translation elongation factor activity"/>
    <property type="evidence" value="ECO:0007669"/>
    <property type="project" value="UniProtKB-UniRule"/>
</dbReference>
<dbReference type="CDD" id="cd14275">
    <property type="entry name" value="UBA_EF-Ts"/>
    <property type="match status" value="1"/>
</dbReference>
<dbReference type="FunFam" id="1.10.8.10:FF:000001">
    <property type="entry name" value="Elongation factor Ts"/>
    <property type="match status" value="1"/>
</dbReference>
<dbReference type="Gene3D" id="1.10.286.20">
    <property type="match status" value="1"/>
</dbReference>
<dbReference type="Gene3D" id="1.10.8.10">
    <property type="entry name" value="DNA helicase RuvA subunit, C-terminal domain"/>
    <property type="match status" value="1"/>
</dbReference>
<dbReference type="Gene3D" id="3.30.479.20">
    <property type="entry name" value="Elongation factor Ts, dimerisation domain"/>
    <property type="match status" value="2"/>
</dbReference>
<dbReference type="HAMAP" id="MF_00050">
    <property type="entry name" value="EF_Ts"/>
    <property type="match status" value="1"/>
</dbReference>
<dbReference type="InterPro" id="IPR036402">
    <property type="entry name" value="EF-Ts_dimer_sf"/>
</dbReference>
<dbReference type="InterPro" id="IPR001816">
    <property type="entry name" value="Transl_elong_EFTs/EF1B"/>
</dbReference>
<dbReference type="InterPro" id="IPR014039">
    <property type="entry name" value="Transl_elong_EFTs/EF1B_dimer"/>
</dbReference>
<dbReference type="InterPro" id="IPR018101">
    <property type="entry name" value="Transl_elong_Ts_CS"/>
</dbReference>
<dbReference type="InterPro" id="IPR009060">
    <property type="entry name" value="UBA-like_sf"/>
</dbReference>
<dbReference type="NCBIfam" id="TIGR00116">
    <property type="entry name" value="tsf"/>
    <property type="match status" value="1"/>
</dbReference>
<dbReference type="PANTHER" id="PTHR11741">
    <property type="entry name" value="ELONGATION FACTOR TS"/>
    <property type="match status" value="1"/>
</dbReference>
<dbReference type="PANTHER" id="PTHR11741:SF0">
    <property type="entry name" value="ELONGATION FACTOR TS, MITOCHONDRIAL"/>
    <property type="match status" value="1"/>
</dbReference>
<dbReference type="Pfam" id="PF00889">
    <property type="entry name" value="EF_TS"/>
    <property type="match status" value="1"/>
</dbReference>
<dbReference type="SUPFAM" id="SSF54713">
    <property type="entry name" value="Elongation factor Ts (EF-Ts), dimerisation domain"/>
    <property type="match status" value="1"/>
</dbReference>
<dbReference type="SUPFAM" id="SSF46934">
    <property type="entry name" value="UBA-like"/>
    <property type="match status" value="1"/>
</dbReference>
<dbReference type="PROSITE" id="PS01126">
    <property type="entry name" value="EF_TS_1"/>
    <property type="match status" value="1"/>
</dbReference>
<dbReference type="PROSITE" id="PS01127">
    <property type="entry name" value="EF_TS_2"/>
    <property type="match status" value="1"/>
</dbReference>
<accession>B8EKA0</accession>
<proteinExistence type="inferred from homology"/>
<organism>
    <name type="scientific">Methylocella silvestris (strain DSM 15510 / CIP 108128 / LMG 27833 / NCIMB 13906 / BL2)</name>
    <dbReference type="NCBI Taxonomy" id="395965"/>
    <lineage>
        <taxon>Bacteria</taxon>
        <taxon>Pseudomonadati</taxon>
        <taxon>Pseudomonadota</taxon>
        <taxon>Alphaproteobacteria</taxon>
        <taxon>Hyphomicrobiales</taxon>
        <taxon>Beijerinckiaceae</taxon>
        <taxon>Methylocella</taxon>
    </lineage>
</organism>
<name>EFTS_METSB</name>
<keyword id="KW-0963">Cytoplasm</keyword>
<keyword id="KW-0251">Elongation factor</keyword>
<keyword id="KW-0648">Protein biosynthesis</keyword>
<keyword id="KW-1185">Reference proteome</keyword>
<feature type="chain" id="PRO_1000117589" description="Elongation factor Ts">
    <location>
        <begin position="1"/>
        <end position="310"/>
    </location>
</feature>
<feature type="region of interest" description="Involved in Mg(2+) ion dislocation from EF-Tu" evidence="1">
    <location>
        <begin position="80"/>
        <end position="83"/>
    </location>
</feature>
<sequence length="310" mass="32001">MASVTAAMVKDLREKTGAGMMDCKNALNETGGDIEAAIDWLRKKGLSKAAKKSGRIAAEGLVAVAVHETDGVVVEVNSETDFVARNEEFQALARTIALVAVEKGLTDVEALKGAHYPGGSTVAEAIANSVATIGENMTLRRVAAVNVAQGVVGQYVHNAVADGLGKIGVIVGLESTGDAVVLAPLARLIALHIAAASPLALEAADLDPAVVAREKAVLADKNAGKPPQVLEKIVESGLKTFYKEVCLVDQPSIHADHANKTIGQVVKEAEKAAGAPVKLKAFVRYALGEGIEKQESDFAAEVAAAASGQL</sequence>